<dbReference type="EC" id="1.8.1.4"/>
<dbReference type="EMBL" id="X70646">
    <property type="protein sequence ID" value="CAA49991.1"/>
    <property type="molecule type" value="Genomic_DNA"/>
</dbReference>
<dbReference type="PIR" id="S30057">
    <property type="entry name" value="S30057"/>
</dbReference>
<dbReference type="SMR" id="Q04933"/>
<dbReference type="GO" id="GO:0005737">
    <property type="term" value="C:cytoplasm"/>
    <property type="evidence" value="ECO:0000314"/>
    <property type="project" value="GeneDB"/>
</dbReference>
<dbReference type="GO" id="GO:0005739">
    <property type="term" value="C:mitochondrion"/>
    <property type="evidence" value="ECO:0000314"/>
    <property type="project" value="GeneDB"/>
</dbReference>
<dbReference type="GO" id="GO:0045252">
    <property type="term" value="C:oxoglutarate dehydrogenase complex"/>
    <property type="evidence" value="ECO:0007669"/>
    <property type="project" value="TreeGrafter"/>
</dbReference>
<dbReference type="GO" id="GO:0004148">
    <property type="term" value="F:dihydrolipoyl dehydrogenase (NADH) activity"/>
    <property type="evidence" value="ECO:0007669"/>
    <property type="project" value="UniProtKB-EC"/>
</dbReference>
<dbReference type="GO" id="GO:0015036">
    <property type="term" value="F:disulfide oxidoreductase activity"/>
    <property type="evidence" value="ECO:0000255"/>
    <property type="project" value="GeneDB"/>
</dbReference>
<dbReference type="GO" id="GO:0050660">
    <property type="term" value="F:flavin adenine dinucleotide binding"/>
    <property type="evidence" value="ECO:0007669"/>
    <property type="project" value="InterPro"/>
</dbReference>
<dbReference type="GO" id="GO:0006103">
    <property type="term" value="P:2-oxoglutarate metabolic process"/>
    <property type="evidence" value="ECO:0007669"/>
    <property type="project" value="TreeGrafter"/>
</dbReference>
<dbReference type="FunFam" id="3.30.390.30:FF:000001">
    <property type="entry name" value="Dihydrolipoyl dehydrogenase"/>
    <property type="match status" value="1"/>
</dbReference>
<dbReference type="FunFam" id="3.50.50.60:FF:000001">
    <property type="entry name" value="Dihydrolipoyl dehydrogenase, mitochondrial"/>
    <property type="match status" value="1"/>
</dbReference>
<dbReference type="Gene3D" id="3.30.390.30">
    <property type="match status" value="1"/>
</dbReference>
<dbReference type="Gene3D" id="3.50.50.60">
    <property type="entry name" value="FAD/NAD(P)-binding domain"/>
    <property type="match status" value="2"/>
</dbReference>
<dbReference type="InterPro" id="IPR050151">
    <property type="entry name" value="Class-I_Pyr_Nuc-Dis_Oxidored"/>
</dbReference>
<dbReference type="InterPro" id="IPR036188">
    <property type="entry name" value="FAD/NAD-bd_sf"/>
</dbReference>
<dbReference type="InterPro" id="IPR023753">
    <property type="entry name" value="FAD/NAD-binding_dom"/>
</dbReference>
<dbReference type="InterPro" id="IPR016156">
    <property type="entry name" value="FAD/NAD-linked_Rdtase_dimer_sf"/>
</dbReference>
<dbReference type="InterPro" id="IPR006258">
    <property type="entry name" value="Lipoamide_DH"/>
</dbReference>
<dbReference type="InterPro" id="IPR001100">
    <property type="entry name" value="Pyr_nuc-diS_OxRdtase"/>
</dbReference>
<dbReference type="InterPro" id="IPR004099">
    <property type="entry name" value="Pyr_nucl-diS_OxRdtase_dimer"/>
</dbReference>
<dbReference type="InterPro" id="IPR012999">
    <property type="entry name" value="Pyr_OxRdtase_I_AS"/>
</dbReference>
<dbReference type="NCBIfam" id="TIGR01350">
    <property type="entry name" value="lipoamide_DH"/>
    <property type="match status" value="1"/>
</dbReference>
<dbReference type="PANTHER" id="PTHR22912:SF151">
    <property type="entry name" value="DIHYDROLIPOYL DEHYDROGENASE, MITOCHONDRIAL"/>
    <property type="match status" value="1"/>
</dbReference>
<dbReference type="PANTHER" id="PTHR22912">
    <property type="entry name" value="DISULFIDE OXIDOREDUCTASE"/>
    <property type="match status" value="1"/>
</dbReference>
<dbReference type="Pfam" id="PF07992">
    <property type="entry name" value="Pyr_redox_2"/>
    <property type="match status" value="1"/>
</dbReference>
<dbReference type="Pfam" id="PF02852">
    <property type="entry name" value="Pyr_redox_dim"/>
    <property type="match status" value="1"/>
</dbReference>
<dbReference type="PIRSF" id="PIRSF000350">
    <property type="entry name" value="Mercury_reductase_MerA"/>
    <property type="match status" value="1"/>
</dbReference>
<dbReference type="PRINTS" id="PR00368">
    <property type="entry name" value="FADPNR"/>
</dbReference>
<dbReference type="PRINTS" id="PR00411">
    <property type="entry name" value="PNDRDTASEI"/>
</dbReference>
<dbReference type="SUPFAM" id="SSF51905">
    <property type="entry name" value="FAD/NAD(P)-binding domain"/>
    <property type="match status" value="1"/>
</dbReference>
<dbReference type="SUPFAM" id="SSF55424">
    <property type="entry name" value="FAD/NAD-linked reductases, dimerisation (C-terminal) domain"/>
    <property type="match status" value="1"/>
</dbReference>
<dbReference type="PROSITE" id="PS00076">
    <property type="entry name" value="PYRIDINE_REDOX_1"/>
    <property type="match status" value="1"/>
</dbReference>
<sequence>MFRRCFPIFNPYDVVVVGGGPGGYVAAIKAAQLGLKTACVEKRGALGGTCLNVGCIPSKALLHATHMYHDAHANFERYGLMGGAGVTMDVAKMQQQKEKSVNGLTSGVEYLLKKNKVTYYKGEAGFVTPNTLNVKGIDGKDEAIEAKNTIIATGSEPTALPFLPFDEKVVLSSTGALALQQVPKKMVVIGGGVIGLELGSVWARLGSDVTVVEFAPRCAPTLDSDVTDALVGALKRNGEDEVPMTGIEGVNGTNNGSIALTLEVEQAGGQAETLHCDALLVSVGRRPYTAGLGLEKNNVSLNERGFVKIGSHFETNVAGVYAIGDVVDKGPMLAHKAEDEGVACAEILAGRPGHVNYDVIPGVIYTMPEVASVGKTEEELKKAGVAYKVGKFPFNANSRAKAVATEDGFVKVLTDKATDRILGVHIVCSAAGELIAGALLAMEYGASSEDVGRTCHAHPTMSEAVKEACMACFAKTINF</sequence>
<comment type="catalytic activity">
    <reaction>
        <text>N(6)-[(R)-dihydrolipoyl]-L-lysyl-[protein] + NAD(+) = N(6)-[(R)-lipoyl]-L-lysyl-[protein] + NADH + H(+)</text>
        <dbReference type="Rhea" id="RHEA:15045"/>
        <dbReference type="Rhea" id="RHEA-COMP:10474"/>
        <dbReference type="Rhea" id="RHEA-COMP:10475"/>
        <dbReference type="ChEBI" id="CHEBI:15378"/>
        <dbReference type="ChEBI" id="CHEBI:57540"/>
        <dbReference type="ChEBI" id="CHEBI:57945"/>
        <dbReference type="ChEBI" id="CHEBI:83099"/>
        <dbReference type="ChEBI" id="CHEBI:83100"/>
        <dbReference type="EC" id="1.8.1.4"/>
    </reaction>
</comment>
<comment type="cofactor">
    <cofactor evidence="1">
        <name>FAD</name>
        <dbReference type="ChEBI" id="CHEBI:57692"/>
    </cofactor>
    <text evidence="1">Binds 1 FAD per subunit.</text>
</comment>
<comment type="subunit">
    <text>Homodimer.</text>
</comment>
<comment type="miscellaneous">
    <text>The active site is a redox-active disulfide bond.</text>
</comment>
<comment type="similarity">
    <text evidence="2">Belongs to the class-I pyridine nucleotide-disulfide oxidoreductase family.</text>
</comment>
<protein>
    <recommendedName>
        <fullName>Dihydrolipoyl dehydrogenase</fullName>
        <ecNumber>1.8.1.4</ecNumber>
    </recommendedName>
    <alternativeName>
        <fullName>Dihydrolipoamide dehydrogenase</fullName>
    </alternativeName>
</protein>
<keyword id="KW-1015">Disulfide bond</keyword>
<keyword id="KW-0274">FAD</keyword>
<keyword id="KW-0285">Flavoprotein</keyword>
<keyword id="KW-0520">NAD</keyword>
<keyword id="KW-0560">Oxidoreductase</keyword>
<keyword id="KW-0676">Redox-active center</keyword>
<name>DLDH_TRYBB</name>
<organism>
    <name type="scientific">Trypanosoma brucei brucei</name>
    <dbReference type="NCBI Taxonomy" id="5702"/>
    <lineage>
        <taxon>Eukaryota</taxon>
        <taxon>Discoba</taxon>
        <taxon>Euglenozoa</taxon>
        <taxon>Kinetoplastea</taxon>
        <taxon>Metakinetoplastina</taxon>
        <taxon>Trypanosomatida</taxon>
        <taxon>Trypanosomatidae</taxon>
        <taxon>Trypanosoma</taxon>
    </lineage>
</organism>
<evidence type="ECO:0000250" key="1"/>
<evidence type="ECO:0000305" key="2"/>
<accession>Q04933</accession>
<reference key="1">
    <citation type="journal article" date="1993" name="Eur. J. Biochem.">
        <title>Cloning, sequencing, and expression of Trypanosoma brucei dihydrolipoamide dehydrogenase.</title>
        <authorList>
            <person name="Else A.J."/>
            <person name="Hough D.W."/>
            <person name="Danson M.J."/>
        </authorList>
    </citation>
    <scope>NUCLEOTIDE SEQUENCE [GENOMIC DNA]</scope>
</reference>
<feature type="chain" id="PRO_0000068008" description="Dihydrolipoyl dehydrogenase">
    <location>
        <begin position="1"/>
        <end position="479"/>
    </location>
</feature>
<feature type="active site" description="Proton acceptor" evidence="1">
    <location>
        <position position="458"/>
    </location>
</feature>
<feature type="binding site" evidence="1">
    <location>
        <begin position="41"/>
        <end position="50"/>
    </location>
    <ligand>
        <name>FAD</name>
        <dbReference type="ChEBI" id="CHEBI:57692"/>
    </ligand>
</feature>
<feature type="binding site" evidence="1">
    <location>
        <position position="59"/>
    </location>
    <ligand>
        <name>FAD</name>
        <dbReference type="ChEBI" id="CHEBI:57692"/>
    </ligand>
</feature>
<feature type="binding site" evidence="1">
    <location>
        <position position="124"/>
    </location>
    <ligand>
        <name>FAD</name>
        <dbReference type="ChEBI" id="CHEBI:57692"/>
    </ligand>
</feature>
<feature type="binding site" evidence="1">
    <location>
        <begin position="153"/>
        <end position="155"/>
    </location>
    <ligand>
        <name>FAD</name>
        <dbReference type="ChEBI" id="CHEBI:57692"/>
    </ligand>
</feature>
<feature type="binding site" evidence="1">
    <location>
        <begin position="190"/>
        <end position="197"/>
    </location>
    <ligand>
        <name>NAD(+)</name>
        <dbReference type="ChEBI" id="CHEBI:57540"/>
    </ligand>
</feature>
<feature type="binding site" evidence="1">
    <location>
        <position position="213"/>
    </location>
    <ligand>
        <name>NAD(+)</name>
        <dbReference type="ChEBI" id="CHEBI:57540"/>
    </ligand>
</feature>
<feature type="binding site" evidence="1">
    <location>
        <position position="247"/>
    </location>
    <ligand>
        <name>NAD(+)</name>
        <dbReference type="ChEBI" id="CHEBI:57540"/>
    </ligand>
</feature>
<feature type="binding site" evidence="1">
    <location>
        <position position="284"/>
    </location>
    <ligand>
        <name>NAD(+)</name>
        <dbReference type="ChEBI" id="CHEBI:57540"/>
    </ligand>
</feature>
<feature type="binding site" evidence="1">
    <location>
        <position position="325"/>
    </location>
    <ligand>
        <name>FAD</name>
        <dbReference type="ChEBI" id="CHEBI:57692"/>
    </ligand>
</feature>
<feature type="binding site" evidence="1">
    <location>
        <begin position="332"/>
        <end position="335"/>
    </location>
    <ligand>
        <name>FAD</name>
        <dbReference type="ChEBI" id="CHEBI:57692"/>
    </ligand>
</feature>
<feature type="disulfide bond" description="Redox-active" evidence="1">
    <location>
        <begin position="50"/>
        <end position="55"/>
    </location>
</feature>
<proteinExistence type="inferred from homology"/>